<accession>Q4QNV7</accession>
<reference key="1">
    <citation type="journal article" date="2005" name="J. Bacteriol.">
        <title>Genomic sequence of an otitis media isolate of nontypeable Haemophilus influenzae: comparative study with H. influenzae serotype d, strain KW20.</title>
        <authorList>
            <person name="Harrison A."/>
            <person name="Dyer D.W."/>
            <person name="Gillaspy A."/>
            <person name="Ray W.C."/>
            <person name="Mungur R."/>
            <person name="Carson M.B."/>
            <person name="Zhong H."/>
            <person name="Gipson J."/>
            <person name="Gipson M."/>
            <person name="Johnson L.S."/>
            <person name="Lewis L."/>
            <person name="Bakaletz L.O."/>
            <person name="Munson R.S. Jr."/>
        </authorList>
    </citation>
    <scope>NUCLEOTIDE SEQUENCE [LARGE SCALE GENOMIC DNA]</scope>
    <source>
        <strain>86-028NP</strain>
    </source>
</reference>
<evidence type="ECO:0000255" key="1">
    <source>
        <dbReference type="HAMAP-Rule" id="MF_01595"/>
    </source>
</evidence>
<protein>
    <recommendedName>
        <fullName evidence="1">Polyribonucleotide nucleotidyltransferase</fullName>
        <ecNumber evidence="1">2.7.7.8</ecNumber>
    </recommendedName>
    <alternativeName>
        <fullName evidence="1">Polynucleotide phosphorylase</fullName>
        <shortName evidence="1">PNPase</shortName>
    </alternativeName>
</protein>
<feature type="chain" id="PRO_0000329670" description="Polyribonucleotide nucleotidyltransferase">
    <location>
        <begin position="1"/>
        <end position="709"/>
    </location>
</feature>
<feature type="domain" description="KH" evidence="1">
    <location>
        <begin position="552"/>
        <end position="611"/>
    </location>
</feature>
<feature type="domain" description="S1 motif" evidence="1">
    <location>
        <begin position="621"/>
        <end position="689"/>
    </location>
</feature>
<feature type="binding site" evidence="1">
    <location>
        <position position="485"/>
    </location>
    <ligand>
        <name>Mg(2+)</name>
        <dbReference type="ChEBI" id="CHEBI:18420"/>
    </ligand>
</feature>
<feature type="binding site" evidence="1">
    <location>
        <position position="491"/>
    </location>
    <ligand>
        <name>Mg(2+)</name>
        <dbReference type="ChEBI" id="CHEBI:18420"/>
    </ligand>
</feature>
<gene>
    <name evidence="1" type="primary">pnp</name>
    <name type="ordered locus">NTHI0334</name>
</gene>
<comment type="function">
    <text evidence="1">Involved in mRNA degradation. Catalyzes the phosphorolysis of single-stranded polyribonucleotides processively in the 3'- to 5'-direction.</text>
</comment>
<comment type="catalytic activity">
    <reaction evidence="1">
        <text>RNA(n+1) + phosphate = RNA(n) + a ribonucleoside 5'-diphosphate</text>
        <dbReference type="Rhea" id="RHEA:22096"/>
        <dbReference type="Rhea" id="RHEA-COMP:14527"/>
        <dbReference type="Rhea" id="RHEA-COMP:17342"/>
        <dbReference type="ChEBI" id="CHEBI:43474"/>
        <dbReference type="ChEBI" id="CHEBI:57930"/>
        <dbReference type="ChEBI" id="CHEBI:140395"/>
        <dbReference type="EC" id="2.7.7.8"/>
    </reaction>
</comment>
<comment type="cofactor">
    <cofactor evidence="1">
        <name>Mg(2+)</name>
        <dbReference type="ChEBI" id="CHEBI:18420"/>
    </cofactor>
</comment>
<comment type="subunit">
    <text evidence="1">Component of the RNA degradosome, which is a multiprotein complex involved in RNA processing and mRNA degradation.</text>
</comment>
<comment type="subcellular location">
    <subcellularLocation>
        <location evidence="1">Cytoplasm</location>
    </subcellularLocation>
</comment>
<comment type="similarity">
    <text evidence="1">Belongs to the polyribonucleotide nucleotidyltransferase family.</text>
</comment>
<organism>
    <name type="scientific">Haemophilus influenzae (strain 86-028NP)</name>
    <dbReference type="NCBI Taxonomy" id="281310"/>
    <lineage>
        <taxon>Bacteria</taxon>
        <taxon>Pseudomonadati</taxon>
        <taxon>Pseudomonadota</taxon>
        <taxon>Gammaproteobacteria</taxon>
        <taxon>Pasteurellales</taxon>
        <taxon>Pasteurellaceae</taxon>
        <taxon>Haemophilus</taxon>
    </lineage>
</organism>
<dbReference type="EC" id="2.7.7.8" evidence="1"/>
<dbReference type="EMBL" id="CP000057">
    <property type="protein sequence ID" value="AAX87290.1"/>
    <property type="molecule type" value="Genomic_DNA"/>
</dbReference>
<dbReference type="RefSeq" id="WP_005660601.1">
    <property type="nucleotide sequence ID" value="NC_007146.2"/>
</dbReference>
<dbReference type="SMR" id="Q4QNV7"/>
<dbReference type="GeneID" id="93219172"/>
<dbReference type="KEGG" id="hit:NTHI0334"/>
<dbReference type="HOGENOM" id="CLU_004217_2_2_6"/>
<dbReference type="Proteomes" id="UP000002525">
    <property type="component" value="Chromosome"/>
</dbReference>
<dbReference type="GO" id="GO:0005829">
    <property type="term" value="C:cytosol"/>
    <property type="evidence" value="ECO:0007669"/>
    <property type="project" value="TreeGrafter"/>
</dbReference>
<dbReference type="GO" id="GO:0000175">
    <property type="term" value="F:3'-5'-RNA exonuclease activity"/>
    <property type="evidence" value="ECO:0007669"/>
    <property type="project" value="TreeGrafter"/>
</dbReference>
<dbReference type="GO" id="GO:0000287">
    <property type="term" value="F:magnesium ion binding"/>
    <property type="evidence" value="ECO:0007669"/>
    <property type="project" value="UniProtKB-UniRule"/>
</dbReference>
<dbReference type="GO" id="GO:0004654">
    <property type="term" value="F:polyribonucleotide nucleotidyltransferase activity"/>
    <property type="evidence" value="ECO:0007669"/>
    <property type="project" value="UniProtKB-UniRule"/>
</dbReference>
<dbReference type="GO" id="GO:0003723">
    <property type="term" value="F:RNA binding"/>
    <property type="evidence" value="ECO:0007669"/>
    <property type="project" value="UniProtKB-UniRule"/>
</dbReference>
<dbReference type="GO" id="GO:0006402">
    <property type="term" value="P:mRNA catabolic process"/>
    <property type="evidence" value="ECO:0007669"/>
    <property type="project" value="UniProtKB-UniRule"/>
</dbReference>
<dbReference type="GO" id="GO:0006396">
    <property type="term" value="P:RNA processing"/>
    <property type="evidence" value="ECO:0007669"/>
    <property type="project" value="InterPro"/>
</dbReference>
<dbReference type="CDD" id="cd02393">
    <property type="entry name" value="KH-I_PNPase"/>
    <property type="match status" value="1"/>
</dbReference>
<dbReference type="CDD" id="cd11363">
    <property type="entry name" value="RNase_PH_PNPase_1"/>
    <property type="match status" value="1"/>
</dbReference>
<dbReference type="CDD" id="cd11364">
    <property type="entry name" value="RNase_PH_PNPase_2"/>
    <property type="match status" value="1"/>
</dbReference>
<dbReference type="CDD" id="cd04472">
    <property type="entry name" value="S1_PNPase"/>
    <property type="match status" value="1"/>
</dbReference>
<dbReference type="FunFam" id="2.40.50.140:FF:000023">
    <property type="entry name" value="Polyribonucleotide nucleotidyltransferase"/>
    <property type="match status" value="1"/>
</dbReference>
<dbReference type="FunFam" id="3.30.1370.10:FF:000001">
    <property type="entry name" value="Polyribonucleotide nucleotidyltransferase"/>
    <property type="match status" value="1"/>
</dbReference>
<dbReference type="FunFam" id="3.30.230.70:FF:000001">
    <property type="entry name" value="Polyribonucleotide nucleotidyltransferase"/>
    <property type="match status" value="1"/>
</dbReference>
<dbReference type="FunFam" id="3.30.230.70:FF:000002">
    <property type="entry name" value="Polyribonucleotide nucleotidyltransferase"/>
    <property type="match status" value="1"/>
</dbReference>
<dbReference type="Gene3D" id="3.30.230.70">
    <property type="entry name" value="GHMP Kinase, N-terminal domain"/>
    <property type="match status" value="2"/>
</dbReference>
<dbReference type="Gene3D" id="3.30.1370.10">
    <property type="entry name" value="K Homology domain, type 1"/>
    <property type="match status" value="1"/>
</dbReference>
<dbReference type="Gene3D" id="2.40.50.140">
    <property type="entry name" value="Nucleic acid-binding proteins"/>
    <property type="match status" value="1"/>
</dbReference>
<dbReference type="HAMAP" id="MF_01595">
    <property type="entry name" value="PNPase"/>
    <property type="match status" value="1"/>
</dbReference>
<dbReference type="InterPro" id="IPR001247">
    <property type="entry name" value="ExoRNase_PH_dom1"/>
</dbReference>
<dbReference type="InterPro" id="IPR015847">
    <property type="entry name" value="ExoRNase_PH_dom2"/>
</dbReference>
<dbReference type="InterPro" id="IPR036345">
    <property type="entry name" value="ExoRNase_PH_dom2_sf"/>
</dbReference>
<dbReference type="InterPro" id="IPR004087">
    <property type="entry name" value="KH_dom"/>
</dbReference>
<dbReference type="InterPro" id="IPR004088">
    <property type="entry name" value="KH_dom_type_1"/>
</dbReference>
<dbReference type="InterPro" id="IPR036612">
    <property type="entry name" value="KH_dom_type_1_sf"/>
</dbReference>
<dbReference type="InterPro" id="IPR012340">
    <property type="entry name" value="NA-bd_OB-fold"/>
</dbReference>
<dbReference type="InterPro" id="IPR012162">
    <property type="entry name" value="PNPase"/>
</dbReference>
<dbReference type="InterPro" id="IPR027408">
    <property type="entry name" value="PNPase/RNase_PH_dom_sf"/>
</dbReference>
<dbReference type="InterPro" id="IPR015848">
    <property type="entry name" value="PNPase_PH_RNA-bd_bac/org-type"/>
</dbReference>
<dbReference type="InterPro" id="IPR020568">
    <property type="entry name" value="Ribosomal_Su5_D2-typ_SF"/>
</dbReference>
<dbReference type="InterPro" id="IPR003029">
    <property type="entry name" value="S1_domain"/>
</dbReference>
<dbReference type="NCBIfam" id="TIGR03591">
    <property type="entry name" value="polynuc_phos"/>
    <property type="match status" value="1"/>
</dbReference>
<dbReference type="NCBIfam" id="NF008805">
    <property type="entry name" value="PRK11824.1"/>
    <property type="match status" value="1"/>
</dbReference>
<dbReference type="PANTHER" id="PTHR11252">
    <property type="entry name" value="POLYRIBONUCLEOTIDE NUCLEOTIDYLTRANSFERASE"/>
    <property type="match status" value="1"/>
</dbReference>
<dbReference type="PANTHER" id="PTHR11252:SF0">
    <property type="entry name" value="POLYRIBONUCLEOTIDE NUCLEOTIDYLTRANSFERASE 1, MITOCHONDRIAL"/>
    <property type="match status" value="1"/>
</dbReference>
<dbReference type="Pfam" id="PF00013">
    <property type="entry name" value="KH_1"/>
    <property type="match status" value="1"/>
</dbReference>
<dbReference type="Pfam" id="PF03726">
    <property type="entry name" value="PNPase"/>
    <property type="match status" value="1"/>
</dbReference>
<dbReference type="Pfam" id="PF01138">
    <property type="entry name" value="RNase_PH"/>
    <property type="match status" value="2"/>
</dbReference>
<dbReference type="Pfam" id="PF03725">
    <property type="entry name" value="RNase_PH_C"/>
    <property type="match status" value="2"/>
</dbReference>
<dbReference type="Pfam" id="PF00575">
    <property type="entry name" value="S1"/>
    <property type="match status" value="1"/>
</dbReference>
<dbReference type="PIRSF" id="PIRSF005499">
    <property type="entry name" value="PNPase"/>
    <property type="match status" value="1"/>
</dbReference>
<dbReference type="SMART" id="SM00322">
    <property type="entry name" value="KH"/>
    <property type="match status" value="1"/>
</dbReference>
<dbReference type="SMART" id="SM00316">
    <property type="entry name" value="S1"/>
    <property type="match status" value="1"/>
</dbReference>
<dbReference type="SUPFAM" id="SSF54791">
    <property type="entry name" value="Eukaryotic type KH-domain (KH-domain type I)"/>
    <property type="match status" value="1"/>
</dbReference>
<dbReference type="SUPFAM" id="SSF50249">
    <property type="entry name" value="Nucleic acid-binding proteins"/>
    <property type="match status" value="1"/>
</dbReference>
<dbReference type="SUPFAM" id="SSF55666">
    <property type="entry name" value="Ribonuclease PH domain 2-like"/>
    <property type="match status" value="2"/>
</dbReference>
<dbReference type="SUPFAM" id="SSF54211">
    <property type="entry name" value="Ribosomal protein S5 domain 2-like"/>
    <property type="match status" value="2"/>
</dbReference>
<dbReference type="PROSITE" id="PS50084">
    <property type="entry name" value="KH_TYPE_1"/>
    <property type="match status" value="1"/>
</dbReference>
<dbReference type="PROSITE" id="PS50126">
    <property type="entry name" value="S1"/>
    <property type="match status" value="1"/>
</dbReference>
<sequence length="709" mass="76979">MNPIVKQFKYGQHTVTLETGAIARQATAAVMASMDDTTVFVTVVAKKDVKEGQDFFPLTVNYQERTYAAGKIPGGFFKREGRPSEGETLIARLIDRPIRPLFPEGFFNEIQVVATVVSVNPQISPDLVAMIGASAALTLSGVPFNGPIGAARVGFIDNQFVLNPTMAEQKQSRLDLVVAGTDKAVLMVESEADILTEEQMLAAVVFGHQQQQVVIEAVKEFAKEAGKPRWDWVAPQPNTDLINKVKAIAEARLGDAYRITEKQARYEQIDAIKADVIAQITAEDEEISESKIVDIFTALESQIVRGRIIAGEPRIDGRTVDTVRALDICTGVLPRTHGSAIFTRGETQALAVATLGTERDAQIIDELTGERQDHFLFHYNFPPYSVGETGMIGSPKRREIGHGRLAKRGVAAVMPSLAEFPYVVRVVSEITESNGSSSMASVCGASLALMDAGVPIKAAVAGIAMGLVKEEEKFVVLSDILGDEDHLGDMDFKVAGTREGVTALQMDIKIEGITPEIMQIALNQAKSARMHILGVMEQAIPAPRADISDYAPRIYTMKIDPKKIKDVIGKGGATIRSLTEETGTSIDIDDDGTVKIAAVDSNAAKNVMGRIEEIVAEVEAGAIYKGKVTRLADFGAFVAIVGNKEGLVHISQIAEERVEKVSDYLQVGQEVNVKVVEIDRQGRIRLTMKDLAPKQETEINQEDPVEEQE</sequence>
<name>PNP_HAEI8</name>
<keyword id="KW-0963">Cytoplasm</keyword>
<keyword id="KW-0460">Magnesium</keyword>
<keyword id="KW-0479">Metal-binding</keyword>
<keyword id="KW-0548">Nucleotidyltransferase</keyword>
<keyword id="KW-0694">RNA-binding</keyword>
<keyword id="KW-0808">Transferase</keyword>
<proteinExistence type="inferred from homology"/>